<dbReference type="EMBL" id="AK096281">
    <property type="protein sequence ID" value="BAC04745.1"/>
    <property type="molecule type" value="mRNA"/>
</dbReference>
<dbReference type="EMBL" id="AL834418">
    <property type="protein sequence ID" value="CAD39080.1"/>
    <property type="molecule type" value="mRNA"/>
</dbReference>
<dbReference type="EMBL" id="CH236956">
    <property type="protein sequence ID" value="EAL23846.1"/>
    <property type="molecule type" value="Genomic_DNA"/>
</dbReference>
<dbReference type="EMBL" id="CH471091">
    <property type="protein sequence ID" value="EAW76578.1"/>
    <property type="molecule type" value="Genomic_DNA"/>
</dbReference>
<dbReference type="EMBL" id="BC027972">
    <property type="protein sequence ID" value="AAH27972.1"/>
    <property type="molecule type" value="mRNA"/>
</dbReference>
<dbReference type="CCDS" id="CCDS5689.1"/>
<dbReference type="RefSeq" id="NP_689955.1">
    <property type="nucleotide sequence ID" value="NM_152742.3"/>
</dbReference>
<dbReference type="PDB" id="6WJL">
    <property type="method" value="X-ray"/>
    <property type="resolution" value="3.30 A"/>
    <property type="chains" value="E/G=23-493"/>
</dbReference>
<dbReference type="PDB" id="7T62">
    <property type="method" value="EM"/>
    <property type="resolution" value="21.00 A"/>
    <property type="chains" value="A=19-579"/>
</dbReference>
<dbReference type="PDBsum" id="6WJL"/>
<dbReference type="PDBsum" id="7T62"/>
<dbReference type="EMDB" id="EMD-25708"/>
<dbReference type="SMR" id="Q8N158"/>
<dbReference type="BioGRID" id="128766">
    <property type="interactions" value="8"/>
</dbReference>
<dbReference type="FunCoup" id="Q8N158">
    <property type="interactions" value="357"/>
</dbReference>
<dbReference type="IntAct" id="Q8N158">
    <property type="interactions" value="9"/>
</dbReference>
<dbReference type="STRING" id="9606.ENSP00000292377"/>
<dbReference type="GlyCosmos" id="Q8N158">
    <property type="glycosylation" value="5 sites, No reported glycans"/>
</dbReference>
<dbReference type="GlyGen" id="Q8N158">
    <property type="glycosylation" value="5 sites"/>
</dbReference>
<dbReference type="iPTMnet" id="Q8N158"/>
<dbReference type="PhosphoSitePlus" id="Q8N158"/>
<dbReference type="BioMuta" id="GPC2"/>
<dbReference type="DMDM" id="60390116"/>
<dbReference type="jPOST" id="Q8N158"/>
<dbReference type="MassIVE" id="Q8N158"/>
<dbReference type="PaxDb" id="9606-ENSP00000292377"/>
<dbReference type="PeptideAtlas" id="Q8N158"/>
<dbReference type="ProteomicsDB" id="71563"/>
<dbReference type="Antibodypedia" id="61583">
    <property type="antibodies" value="123 antibodies from 22 providers"/>
</dbReference>
<dbReference type="DNASU" id="221914"/>
<dbReference type="Ensembl" id="ENST00000292377.4">
    <property type="protein sequence ID" value="ENSP00000292377.2"/>
    <property type="gene ID" value="ENSG00000213420.8"/>
</dbReference>
<dbReference type="GeneID" id="221914"/>
<dbReference type="KEGG" id="hsa:221914"/>
<dbReference type="MANE-Select" id="ENST00000292377.4">
    <property type="protein sequence ID" value="ENSP00000292377.2"/>
    <property type="RefSeq nucleotide sequence ID" value="NM_152742.3"/>
    <property type="RefSeq protein sequence ID" value="NP_689955.1"/>
</dbReference>
<dbReference type="UCSC" id="uc003utv.3">
    <property type="organism name" value="human"/>
</dbReference>
<dbReference type="AGR" id="HGNC:4450"/>
<dbReference type="CTD" id="221914"/>
<dbReference type="DisGeNET" id="221914"/>
<dbReference type="GeneCards" id="GPC2"/>
<dbReference type="HGNC" id="HGNC:4450">
    <property type="gene designation" value="GPC2"/>
</dbReference>
<dbReference type="HPA" id="ENSG00000213420">
    <property type="expression patterns" value="Tissue enhanced (lymphoid tissue, skin, testis)"/>
</dbReference>
<dbReference type="MIM" id="618446">
    <property type="type" value="gene"/>
</dbReference>
<dbReference type="neXtProt" id="NX_Q8N158"/>
<dbReference type="OpenTargets" id="ENSG00000213420"/>
<dbReference type="PharmGKB" id="PA28831"/>
<dbReference type="VEuPathDB" id="HostDB:ENSG00000213420"/>
<dbReference type="eggNOG" id="KOG3821">
    <property type="taxonomic scope" value="Eukaryota"/>
</dbReference>
<dbReference type="GeneTree" id="ENSGT01050000244897"/>
<dbReference type="HOGENOM" id="CLU_024658_2_1_1"/>
<dbReference type="InParanoid" id="Q8N158"/>
<dbReference type="OMA" id="GFHTQPI"/>
<dbReference type="OrthoDB" id="10010764at2759"/>
<dbReference type="PAN-GO" id="Q8N158">
    <property type="GO annotations" value="5 GO annotations based on evolutionary models"/>
</dbReference>
<dbReference type="PhylomeDB" id="Q8N158"/>
<dbReference type="TreeFam" id="TF105317"/>
<dbReference type="PathwayCommons" id="Q8N158"/>
<dbReference type="Reactome" id="R-HSA-1971475">
    <property type="pathway name" value="A tetrasaccharide linker sequence is required for GAG synthesis"/>
</dbReference>
<dbReference type="Reactome" id="R-HSA-2022928">
    <property type="pathway name" value="HS-GAG biosynthesis"/>
</dbReference>
<dbReference type="Reactome" id="R-HSA-2024096">
    <property type="pathway name" value="HS-GAG degradation"/>
</dbReference>
<dbReference type="Reactome" id="R-HSA-3560783">
    <property type="pathway name" value="Defective B4GALT7 causes EDS, progeroid type"/>
</dbReference>
<dbReference type="Reactome" id="R-HSA-3560801">
    <property type="pathway name" value="Defective B3GAT3 causes JDSSDHD"/>
</dbReference>
<dbReference type="Reactome" id="R-HSA-3656237">
    <property type="pathway name" value="Defective EXT2 causes exostoses 2"/>
</dbReference>
<dbReference type="Reactome" id="R-HSA-3656253">
    <property type="pathway name" value="Defective EXT1 causes exostoses 1, TRPS2 and CHDS"/>
</dbReference>
<dbReference type="Reactome" id="R-HSA-4420332">
    <property type="pathway name" value="Defective B3GALT6 causes EDSP2 and SEMDJL1"/>
</dbReference>
<dbReference type="Reactome" id="R-HSA-9694614">
    <property type="pathway name" value="Attachment and Entry"/>
</dbReference>
<dbReference type="Reactome" id="R-HSA-975634">
    <property type="pathway name" value="Retinoid metabolism and transport"/>
</dbReference>
<dbReference type="Reactome" id="R-HSA-9820960">
    <property type="pathway name" value="Respiratory syncytial virus (RSV) attachment and entry"/>
</dbReference>
<dbReference type="Reactome" id="R-HSA-9833110">
    <property type="pathway name" value="RSV-host interactions"/>
</dbReference>
<dbReference type="BioGRID-ORCS" id="221914">
    <property type="hits" value="15 hits in 1154 CRISPR screens"/>
</dbReference>
<dbReference type="GeneWiki" id="Glypican_2"/>
<dbReference type="GenomeRNAi" id="221914"/>
<dbReference type="Pharos" id="Q8N158">
    <property type="development level" value="Tbio"/>
</dbReference>
<dbReference type="PRO" id="PR:Q8N158"/>
<dbReference type="Proteomes" id="UP000005640">
    <property type="component" value="Chromosome 7"/>
</dbReference>
<dbReference type="RNAct" id="Q8N158">
    <property type="molecule type" value="protein"/>
</dbReference>
<dbReference type="Bgee" id="ENSG00000213420">
    <property type="expression patterns" value="Expressed in ganglionic eminence and 150 other cell types or tissues"/>
</dbReference>
<dbReference type="ExpressionAtlas" id="Q8N158">
    <property type="expression patterns" value="baseline and differential"/>
</dbReference>
<dbReference type="GO" id="GO:0009986">
    <property type="term" value="C:cell surface"/>
    <property type="evidence" value="ECO:0000318"/>
    <property type="project" value="GO_Central"/>
</dbReference>
<dbReference type="GO" id="GO:0005783">
    <property type="term" value="C:endoplasmic reticulum"/>
    <property type="evidence" value="ECO:0000314"/>
    <property type="project" value="LIFEdb"/>
</dbReference>
<dbReference type="GO" id="GO:0005576">
    <property type="term" value="C:extracellular region"/>
    <property type="evidence" value="ECO:0007669"/>
    <property type="project" value="UniProtKB-SubCell"/>
</dbReference>
<dbReference type="GO" id="GO:0005796">
    <property type="term" value="C:Golgi lumen"/>
    <property type="evidence" value="ECO:0000304"/>
    <property type="project" value="Reactome"/>
</dbReference>
<dbReference type="GO" id="GO:0043202">
    <property type="term" value="C:lysosomal lumen"/>
    <property type="evidence" value="ECO:0000304"/>
    <property type="project" value="Reactome"/>
</dbReference>
<dbReference type="GO" id="GO:0005886">
    <property type="term" value="C:plasma membrane"/>
    <property type="evidence" value="ECO:0000304"/>
    <property type="project" value="Reactome"/>
</dbReference>
<dbReference type="GO" id="GO:0098552">
    <property type="term" value="C:side of membrane"/>
    <property type="evidence" value="ECO:0007669"/>
    <property type="project" value="UniProtKB-KW"/>
</dbReference>
<dbReference type="GO" id="GO:0045202">
    <property type="term" value="C:synapse"/>
    <property type="evidence" value="ECO:0000318"/>
    <property type="project" value="GO_Central"/>
</dbReference>
<dbReference type="GO" id="GO:0016477">
    <property type="term" value="P:cell migration"/>
    <property type="evidence" value="ECO:0000318"/>
    <property type="project" value="GO_Central"/>
</dbReference>
<dbReference type="GO" id="GO:0030182">
    <property type="term" value="P:neuron differentiation"/>
    <property type="evidence" value="ECO:0007669"/>
    <property type="project" value="Ensembl"/>
</dbReference>
<dbReference type="GO" id="GO:0010976">
    <property type="term" value="P:positive regulation of neuron projection development"/>
    <property type="evidence" value="ECO:0000250"/>
    <property type="project" value="UniProtKB"/>
</dbReference>
<dbReference type="GO" id="GO:1905475">
    <property type="term" value="P:regulation of protein localization to membrane"/>
    <property type="evidence" value="ECO:0000318"/>
    <property type="project" value="GO_Central"/>
</dbReference>
<dbReference type="GO" id="GO:0009966">
    <property type="term" value="P:regulation of signal transduction"/>
    <property type="evidence" value="ECO:0007669"/>
    <property type="project" value="InterPro"/>
</dbReference>
<dbReference type="GO" id="GO:0007224">
    <property type="term" value="P:smoothened signaling pathway"/>
    <property type="evidence" value="ECO:0000318"/>
    <property type="project" value="GO_Central"/>
</dbReference>
<dbReference type="InterPro" id="IPR001863">
    <property type="entry name" value="Glypican"/>
</dbReference>
<dbReference type="InterPro" id="IPR019803">
    <property type="entry name" value="Glypican_CS"/>
</dbReference>
<dbReference type="PANTHER" id="PTHR10822">
    <property type="entry name" value="GLYPICAN"/>
    <property type="match status" value="1"/>
</dbReference>
<dbReference type="PANTHER" id="PTHR10822:SF24">
    <property type="entry name" value="GLYPICAN-2"/>
    <property type="match status" value="1"/>
</dbReference>
<dbReference type="Pfam" id="PF01153">
    <property type="entry name" value="Glypican"/>
    <property type="match status" value="1"/>
</dbReference>
<dbReference type="PROSITE" id="PS01207">
    <property type="entry name" value="GLYPICAN"/>
    <property type="match status" value="1"/>
</dbReference>
<gene>
    <name type="primary">GPC2</name>
</gene>
<keyword id="KW-0002">3D-structure</keyword>
<keyword id="KW-1003">Cell membrane</keyword>
<keyword id="KW-0325">Glycoprotein</keyword>
<keyword id="KW-0336">GPI-anchor</keyword>
<keyword id="KW-0357">Heparan sulfate</keyword>
<keyword id="KW-0449">Lipoprotein</keyword>
<keyword id="KW-0472">Membrane</keyword>
<keyword id="KW-0654">Proteoglycan</keyword>
<keyword id="KW-1267">Proteomics identification</keyword>
<keyword id="KW-1185">Reference proteome</keyword>
<keyword id="KW-0964">Secreted</keyword>
<keyword id="KW-0732">Signal</keyword>
<name>GPC2_HUMAN</name>
<feature type="signal peptide" evidence="3">
    <location>
        <begin position="1"/>
        <end position="23"/>
    </location>
</feature>
<feature type="chain" id="PRO_0000012303" description="Glypican-2">
    <location>
        <begin position="24"/>
        <end position="554"/>
    </location>
</feature>
<feature type="chain" id="PRO_0000333841" description="Secreted glypican-2">
    <location>
        <begin position="24"/>
        <end status="unknown"/>
    </location>
</feature>
<feature type="propeptide" id="PRO_0000012304" description="Removed in mature form" evidence="3">
    <location>
        <begin position="555"/>
        <end position="579"/>
    </location>
</feature>
<feature type="region of interest" description="Disordered" evidence="4">
    <location>
        <begin position="444"/>
        <end position="468"/>
    </location>
</feature>
<feature type="region of interest" description="Disordered" evidence="4">
    <location>
        <begin position="485"/>
        <end position="555"/>
    </location>
</feature>
<feature type="compositionally biased region" description="Pro residues" evidence="4">
    <location>
        <begin position="520"/>
        <end position="529"/>
    </location>
</feature>
<feature type="lipid moiety-binding region" description="GPI-anchor amidated glycine" evidence="3">
    <location>
        <position position="554"/>
    </location>
</feature>
<feature type="glycosylation site" description="O-linked (Xyl...) (heparan sulfate) serine" evidence="3">
    <location>
        <position position="55"/>
    </location>
</feature>
<feature type="glycosylation site" description="O-linked (Xyl...) (heparan sulfate) serine" evidence="3">
    <location>
        <position position="92"/>
    </location>
</feature>
<feature type="glycosylation site" description="O-linked (Xyl...) (heparan sulfate) serine" evidence="3">
    <location>
        <position position="155"/>
    </location>
</feature>
<feature type="glycosylation site" description="O-linked (Xyl...) (heparan sulfate) serine" evidence="3">
    <location>
        <position position="500"/>
    </location>
</feature>
<feature type="glycosylation site" description="O-linked (Xyl...) (heparan sulfate) serine" evidence="3">
    <location>
        <position position="502"/>
    </location>
</feature>
<feature type="sequence variant" id="VAR_036045" description="In a breast cancer sample; somatic mutation; dbSNP:rs1333017606." evidence="5">
    <original>D</original>
    <variation>N</variation>
    <location>
        <position position="200"/>
    </location>
</feature>
<feature type="helix" evidence="7">
    <location>
        <begin position="33"/>
        <end position="42"/>
    </location>
</feature>
<feature type="strand" evidence="7">
    <location>
        <begin position="47"/>
        <end position="51"/>
    </location>
</feature>
<feature type="helix" evidence="7">
    <location>
        <begin position="71"/>
        <end position="92"/>
    </location>
</feature>
<feature type="helix" evidence="7">
    <location>
        <begin position="94"/>
        <end position="129"/>
    </location>
</feature>
<feature type="strand" evidence="7">
    <location>
        <begin position="131"/>
        <end position="134"/>
    </location>
</feature>
<feature type="helix" evidence="7">
    <location>
        <begin position="139"/>
        <end position="152"/>
    </location>
</feature>
<feature type="helix" evidence="7">
    <location>
        <begin position="160"/>
        <end position="174"/>
    </location>
</feature>
<feature type="helix" evidence="7">
    <location>
        <begin position="175"/>
        <end position="177"/>
    </location>
</feature>
<feature type="strand" evidence="7">
    <location>
        <begin position="192"/>
        <end position="196"/>
    </location>
</feature>
<feature type="turn" evidence="7">
    <location>
        <begin position="199"/>
        <end position="201"/>
    </location>
</feature>
<feature type="helix" evidence="7">
    <location>
        <begin position="209"/>
        <end position="241"/>
    </location>
</feature>
<feature type="helix" evidence="7">
    <location>
        <begin position="248"/>
        <end position="251"/>
    </location>
</feature>
<feature type="turn" evidence="7">
    <location>
        <begin position="252"/>
        <end position="258"/>
    </location>
</feature>
<feature type="helix" evidence="7">
    <location>
        <begin position="259"/>
        <end position="263"/>
    </location>
</feature>
<feature type="helix" evidence="7">
    <location>
        <begin position="273"/>
        <end position="284"/>
    </location>
</feature>
<feature type="helix" evidence="7">
    <location>
        <begin position="290"/>
        <end position="308"/>
    </location>
</feature>
<feature type="helix" evidence="7">
    <location>
        <begin position="314"/>
        <end position="340"/>
    </location>
</feature>
<feature type="helix" evidence="7">
    <location>
        <begin position="387"/>
        <end position="399"/>
    </location>
</feature>
<feature type="turn" evidence="7">
    <location>
        <begin position="400"/>
        <end position="407"/>
    </location>
</feature>
<feature type="helix" evidence="7">
    <location>
        <begin position="408"/>
        <end position="412"/>
    </location>
</feature>
<feature type="strand" evidence="7">
    <location>
        <begin position="432"/>
        <end position="435"/>
    </location>
</feature>
<feature type="helix" evidence="7">
    <location>
        <begin position="447"/>
        <end position="450"/>
    </location>
</feature>
<feature type="strand" evidence="7">
    <location>
        <begin position="454"/>
        <end position="456"/>
    </location>
</feature>
<feature type="strand" evidence="7">
    <location>
        <begin position="460"/>
        <end position="463"/>
    </location>
</feature>
<feature type="helix" evidence="7">
    <location>
        <begin position="467"/>
        <end position="469"/>
    </location>
</feature>
<feature type="turn" evidence="7">
    <location>
        <begin position="470"/>
        <end position="472"/>
    </location>
</feature>
<feature type="strand" evidence="7">
    <location>
        <begin position="473"/>
        <end position="475"/>
    </location>
</feature>
<feature type="helix" evidence="7">
    <location>
        <begin position="476"/>
        <end position="486"/>
    </location>
</feature>
<proteinExistence type="evidence at protein level"/>
<accession>Q8N158</accession>
<accession>A4D2A7</accession>
<comment type="function">
    <text evidence="1">Cell surface proteoglycan that bears heparan sulfate. May fulfill a function related to the motile behaviors of developing neurons (By similarity).</text>
</comment>
<comment type="subunit">
    <text evidence="2">Interacts (via heparan sulfate) with PTN; this interaction promotes neurite outgrowth through binding of PTN with chondroitin sulfate of proteoglycans, thereby releasing PTPRS of chondroitin sulfate proteoglycans (CSPGs) and leading to binding with heparan sulfate of GPC2. Interacts (heparan sulfate chain) with MDK; this interaction is inhibited by heparin followed by chondroitin sulfate E; this interaction induces GPC2 clustering through heparan sulfate chain; this interaction induces neuronal cell adhesion and neurite outgrowth (By similarity).</text>
</comment>
<comment type="subcellular location">
    <subcellularLocation>
        <location evidence="1">Cell membrane</location>
        <topology evidence="1">Lipid-anchor</topology>
        <topology evidence="1">GPI-anchor</topology>
        <orientation evidence="1">Extracellular side</orientation>
    </subcellularLocation>
</comment>
<comment type="subcellular location">
    <molecule>Secreted glypican-2</molecule>
    <subcellularLocation>
        <location evidence="1">Secreted</location>
        <location evidence="1">Extracellular space</location>
    </subcellularLocation>
</comment>
<comment type="similarity">
    <text evidence="6">Belongs to the glypican family.</text>
</comment>
<reference key="1">
    <citation type="journal article" date="2004" name="Nat. Genet.">
        <title>Complete sequencing and characterization of 21,243 full-length human cDNAs.</title>
        <authorList>
            <person name="Ota T."/>
            <person name="Suzuki Y."/>
            <person name="Nishikawa T."/>
            <person name="Otsuki T."/>
            <person name="Sugiyama T."/>
            <person name="Irie R."/>
            <person name="Wakamatsu A."/>
            <person name="Hayashi K."/>
            <person name="Sato H."/>
            <person name="Nagai K."/>
            <person name="Kimura K."/>
            <person name="Makita H."/>
            <person name="Sekine M."/>
            <person name="Obayashi M."/>
            <person name="Nishi T."/>
            <person name="Shibahara T."/>
            <person name="Tanaka T."/>
            <person name="Ishii S."/>
            <person name="Yamamoto J."/>
            <person name="Saito K."/>
            <person name="Kawai Y."/>
            <person name="Isono Y."/>
            <person name="Nakamura Y."/>
            <person name="Nagahari K."/>
            <person name="Murakami K."/>
            <person name="Yasuda T."/>
            <person name="Iwayanagi T."/>
            <person name="Wagatsuma M."/>
            <person name="Shiratori A."/>
            <person name="Sudo H."/>
            <person name="Hosoiri T."/>
            <person name="Kaku Y."/>
            <person name="Kodaira H."/>
            <person name="Kondo H."/>
            <person name="Sugawara M."/>
            <person name="Takahashi M."/>
            <person name="Kanda K."/>
            <person name="Yokoi T."/>
            <person name="Furuya T."/>
            <person name="Kikkawa E."/>
            <person name="Omura Y."/>
            <person name="Abe K."/>
            <person name="Kamihara K."/>
            <person name="Katsuta N."/>
            <person name="Sato K."/>
            <person name="Tanikawa M."/>
            <person name="Yamazaki M."/>
            <person name="Ninomiya K."/>
            <person name="Ishibashi T."/>
            <person name="Yamashita H."/>
            <person name="Murakawa K."/>
            <person name="Fujimori K."/>
            <person name="Tanai H."/>
            <person name="Kimata M."/>
            <person name="Watanabe M."/>
            <person name="Hiraoka S."/>
            <person name="Chiba Y."/>
            <person name="Ishida S."/>
            <person name="Ono Y."/>
            <person name="Takiguchi S."/>
            <person name="Watanabe S."/>
            <person name="Yosida M."/>
            <person name="Hotuta T."/>
            <person name="Kusano J."/>
            <person name="Kanehori K."/>
            <person name="Takahashi-Fujii A."/>
            <person name="Hara H."/>
            <person name="Tanase T.-O."/>
            <person name="Nomura Y."/>
            <person name="Togiya S."/>
            <person name="Komai F."/>
            <person name="Hara R."/>
            <person name="Takeuchi K."/>
            <person name="Arita M."/>
            <person name="Imose N."/>
            <person name="Musashino K."/>
            <person name="Yuuki H."/>
            <person name="Oshima A."/>
            <person name="Sasaki N."/>
            <person name="Aotsuka S."/>
            <person name="Yoshikawa Y."/>
            <person name="Matsunawa H."/>
            <person name="Ichihara T."/>
            <person name="Shiohata N."/>
            <person name="Sano S."/>
            <person name="Moriya S."/>
            <person name="Momiyama H."/>
            <person name="Satoh N."/>
            <person name="Takami S."/>
            <person name="Terashima Y."/>
            <person name="Suzuki O."/>
            <person name="Nakagawa S."/>
            <person name="Senoh A."/>
            <person name="Mizoguchi H."/>
            <person name="Goto Y."/>
            <person name="Shimizu F."/>
            <person name="Wakebe H."/>
            <person name="Hishigaki H."/>
            <person name="Watanabe T."/>
            <person name="Sugiyama A."/>
            <person name="Takemoto M."/>
            <person name="Kawakami B."/>
            <person name="Yamazaki M."/>
            <person name="Watanabe K."/>
            <person name="Kumagai A."/>
            <person name="Itakura S."/>
            <person name="Fukuzumi Y."/>
            <person name="Fujimori Y."/>
            <person name="Komiyama M."/>
            <person name="Tashiro H."/>
            <person name="Tanigami A."/>
            <person name="Fujiwara T."/>
            <person name="Ono T."/>
            <person name="Yamada K."/>
            <person name="Fujii Y."/>
            <person name="Ozaki K."/>
            <person name="Hirao M."/>
            <person name="Ohmori Y."/>
            <person name="Kawabata A."/>
            <person name="Hikiji T."/>
            <person name="Kobatake N."/>
            <person name="Inagaki H."/>
            <person name="Ikema Y."/>
            <person name="Okamoto S."/>
            <person name="Okitani R."/>
            <person name="Kawakami T."/>
            <person name="Noguchi S."/>
            <person name="Itoh T."/>
            <person name="Shigeta K."/>
            <person name="Senba T."/>
            <person name="Matsumura K."/>
            <person name="Nakajima Y."/>
            <person name="Mizuno T."/>
            <person name="Morinaga M."/>
            <person name="Sasaki M."/>
            <person name="Togashi T."/>
            <person name="Oyama M."/>
            <person name="Hata H."/>
            <person name="Watanabe M."/>
            <person name="Komatsu T."/>
            <person name="Mizushima-Sugano J."/>
            <person name="Satoh T."/>
            <person name="Shirai Y."/>
            <person name="Takahashi Y."/>
            <person name="Nakagawa K."/>
            <person name="Okumura K."/>
            <person name="Nagase T."/>
            <person name="Nomura N."/>
            <person name="Kikuchi H."/>
            <person name="Masuho Y."/>
            <person name="Yamashita R."/>
            <person name="Nakai K."/>
            <person name="Yada T."/>
            <person name="Nakamura Y."/>
            <person name="Ohara O."/>
            <person name="Isogai T."/>
            <person name="Sugano S."/>
        </authorList>
    </citation>
    <scope>NUCLEOTIDE SEQUENCE [LARGE SCALE MRNA]</scope>
</reference>
<reference key="2">
    <citation type="journal article" date="2007" name="BMC Genomics">
        <title>The full-ORF clone resource of the German cDNA consortium.</title>
        <authorList>
            <person name="Bechtel S."/>
            <person name="Rosenfelder H."/>
            <person name="Duda A."/>
            <person name="Schmidt C.P."/>
            <person name="Ernst U."/>
            <person name="Wellenreuther R."/>
            <person name="Mehrle A."/>
            <person name="Schuster C."/>
            <person name="Bahr A."/>
            <person name="Bloecker H."/>
            <person name="Heubner D."/>
            <person name="Hoerlein A."/>
            <person name="Michel G."/>
            <person name="Wedler H."/>
            <person name="Koehrer K."/>
            <person name="Ottenwaelder B."/>
            <person name="Poustka A."/>
            <person name="Wiemann S."/>
            <person name="Schupp I."/>
        </authorList>
    </citation>
    <scope>NUCLEOTIDE SEQUENCE [LARGE SCALE MRNA]</scope>
    <source>
        <tissue>Brain</tissue>
    </source>
</reference>
<reference key="3">
    <citation type="journal article" date="2003" name="Science">
        <title>Human chromosome 7: DNA sequence and biology.</title>
        <authorList>
            <person name="Scherer S.W."/>
            <person name="Cheung J."/>
            <person name="MacDonald J.R."/>
            <person name="Osborne L.R."/>
            <person name="Nakabayashi K."/>
            <person name="Herbrick J.-A."/>
            <person name="Carson A.R."/>
            <person name="Parker-Katiraee L."/>
            <person name="Skaug J."/>
            <person name="Khaja R."/>
            <person name="Zhang J."/>
            <person name="Hudek A.K."/>
            <person name="Li M."/>
            <person name="Haddad M."/>
            <person name="Duggan G.E."/>
            <person name="Fernandez B.A."/>
            <person name="Kanematsu E."/>
            <person name="Gentles S."/>
            <person name="Christopoulos C.C."/>
            <person name="Choufani S."/>
            <person name="Kwasnicka D."/>
            <person name="Zheng X.H."/>
            <person name="Lai Z."/>
            <person name="Nusskern D.R."/>
            <person name="Zhang Q."/>
            <person name="Gu Z."/>
            <person name="Lu F."/>
            <person name="Zeesman S."/>
            <person name="Nowaczyk M.J."/>
            <person name="Teshima I."/>
            <person name="Chitayat D."/>
            <person name="Shuman C."/>
            <person name="Weksberg R."/>
            <person name="Zackai E.H."/>
            <person name="Grebe T.A."/>
            <person name="Cox S.R."/>
            <person name="Kirkpatrick S.J."/>
            <person name="Rahman N."/>
            <person name="Friedman J.M."/>
            <person name="Heng H.H.Q."/>
            <person name="Pelicci P.G."/>
            <person name="Lo-Coco F."/>
            <person name="Belloni E."/>
            <person name="Shaffer L.G."/>
            <person name="Pober B."/>
            <person name="Morton C.C."/>
            <person name="Gusella J.F."/>
            <person name="Bruns G.A.P."/>
            <person name="Korf B.R."/>
            <person name="Quade B.J."/>
            <person name="Ligon A.H."/>
            <person name="Ferguson H."/>
            <person name="Higgins A.W."/>
            <person name="Leach N.T."/>
            <person name="Herrick S.R."/>
            <person name="Lemyre E."/>
            <person name="Farra C.G."/>
            <person name="Kim H.-G."/>
            <person name="Summers A.M."/>
            <person name="Gripp K.W."/>
            <person name="Roberts W."/>
            <person name="Szatmari P."/>
            <person name="Winsor E.J.T."/>
            <person name="Grzeschik K.-H."/>
            <person name="Teebi A."/>
            <person name="Minassian B.A."/>
            <person name="Kere J."/>
            <person name="Armengol L."/>
            <person name="Pujana M.A."/>
            <person name="Estivill X."/>
            <person name="Wilson M.D."/>
            <person name="Koop B.F."/>
            <person name="Tosi S."/>
            <person name="Moore G.E."/>
            <person name="Boright A.P."/>
            <person name="Zlotorynski E."/>
            <person name="Kerem B."/>
            <person name="Kroisel P.M."/>
            <person name="Petek E."/>
            <person name="Oscier D.G."/>
            <person name="Mould S.J."/>
            <person name="Doehner H."/>
            <person name="Doehner K."/>
            <person name="Rommens J.M."/>
            <person name="Vincent J.B."/>
            <person name="Venter J.C."/>
            <person name="Li P.W."/>
            <person name="Mural R.J."/>
            <person name="Adams M.D."/>
            <person name="Tsui L.-C."/>
        </authorList>
    </citation>
    <scope>NUCLEOTIDE SEQUENCE [LARGE SCALE GENOMIC DNA]</scope>
</reference>
<reference key="4">
    <citation type="submission" date="2005-09" db="EMBL/GenBank/DDBJ databases">
        <authorList>
            <person name="Mural R.J."/>
            <person name="Istrail S."/>
            <person name="Sutton G.G."/>
            <person name="Florea L."/>
            <person name="Halpern A.L."/>
            <person name="Mobarry C.M."/>
            <person name="Lippert R."/>
            <person name="Walenz B."/>
            <person name="Shatkay H."/>
            <person name="Dew I."/>
            <person name="Miller J.R."/>
            <person name="Flanigan M.J."/>
            <person name="Edwards N.J."/>
            <person name="Bolanos R."/>
            <person name="Fasulo D."/>
            <person name="Halldorsson B.V."/>
            <person name="Hannenhalli S."/>
            <person name="Turner R."/>
            <person name="Yooseph S."/>
            <person name="Lu F."/>
            <person name="Nusskern D.R."/>
            <person name="Shue B.C."/>
            <person name="Zheng X.H."/>
            <person name="Zhong F."/>
            <person name="Delcher A.L."/>
            <person name="Huson D.H."/>
            <person name="Kravitz S.A."/>
            <person name="Mouchard L."/>
            <person name="Reinert K."/>
            <person name="Remington K.A."/>
            <person name="Clark A.G."/>
            <person name="Waterman M.S."/>
            <person name="Eichler E.E."/>
            <person name="Adams M.D."/>
            <person name="Hunkapiller M.W."/>
            <person name="Myers E.W."/>
            <person name="Venter J.C."/>
        </authorList>
    </citation>
    <scope>NUCLEOTIDE SEQUENCE [LARGE SCALE GENOMIC DNA]</scope>
</reference>
<reference key="5">
    <citation type="journal article" date="2004" name="Genome Res.">
        <title>The status, quality, and expansion of the NIH full-length cDNA project: the Mammalian Gene Collection (MGC).</title>
        <authorList>
            <consortium name="The MGC Project Team"/>
        </authorList>
    </citation>
    <scope>NUCLEOTIDE SEQUENCE [LARGE SCALE MRNA]</scope>
    <source>
        <tissue>Brain</tissue>
    </source>
</reference>
<reference key="6">
    <citation type="journal article" date="2006" name="Science">
        <title>The consensus coding sequences of human breast and colorectal cancers.</title>
        <authorList>
            <person name="Sjoeblom T."/>
            <person name="Jones S."/>
            <person name="Wood L.D."/>
            <person name="Parsons D.W."/>
            <person name="Lin J."/>
            <person name="Barber T.D."/>
            <person name="Mandelker D."/>
            <person name="Leary R.J."/>
            <person name="Ptak J."/>
            <person name="Silliman N."/>
            <person name="Szabo S."/>
            <person name="Buckhaults P."/>
            <person name="Farrell C."/>
            <person name="Meeh P."/>
            <person name="Markowitz S.D."/>
            <person name="Willis J."/>
            <person name="Dawson D."/>
            <person name="Willson J.K.V."/>
            <person name="Gazdar A.F."/>
            <person name="Hartigan J."/>
            <person name="Wu L."/>
            <person name="Liu C."/>
            <person name="Parmigiani G."/>
            <person name="Park B.H."/>
            <person name="Bachman K.E."/>
            <person name="Papadopoulos N."/>
            <person name="Vogelstein B."/>
            <person name="Kinzler K.W."/>
            <person name="Velculescu V.E."/>
        </authorList>
    </citation>
    <scope>VARIANT [LARGE SCALE ANALYSIS] ASN-200</scope>
</reference>
<sequence length="579" mass="62830">MSALRPLLLLLLPLCPGPGPGPGSEAKVTRSCAETRQVLGARGYSLNLIPPALISGEHLRVCPQEYTCCSSETEQRLIRETEATFRGLVEDSGSFLVHTLAARHRKFDEFFLEMLSVAQHSLTQLFSHSYGRLYAQHALIFNGLFSRLRDFYGESGEGLDDTLADFWAQLLERVFPLLHPQYSFPPDYLLCLSRLASSTDGSLQPFGDSPRRLRLQITRTLVAARAFVQGLETGRNVVSEALKVPVSEGCSQALMRLIGCPLCRGVPSLMPCQGFCLNVVRGCLSSRGLEPDWGNYLDGLLILADKLQGPFSFELTAESIGVKISEGLMYLQENSAKVSAQVFQECGPPDPVPARNRRAPPPREEAGRLWSMVTEEERPTTAAGTNLHRLVWELRERLARMRGFWARLSLTVCGDSRMAADASLEAAPCWTGAGRGRYLPPVVGGSPAEQVNNPELKVDASGPDVPTRRRRLQLRAATARMKTAALGHDLDGQDADEDASGSGGGQQYADDWMAGAVAPPARPPRPPYPPRRDGSGGKGGGGSARYNQGRSRSGGASIGFHTQTILILSLSALALLGPR</sequence>
<evidence type="ECO:0000250" key="1"/>
<evidence type="ECO:0000250" key="2">
    <source>
        <dbReference type="UniProtKB" id="P51653"/>
    </source>
</evidence>
<evidence type="ECO:0000255" key="3"/>
<evidence type="ECO:0000256" key="4">
    <source>
        <dbReference type="SAM" id="MobiDB-lite"/>
    </source>
</evidence>
<evidence type="ECO:0000269" key="5">
    <source>
    </source>
</evidence>
<evidence type="ECO:0000305" key="6"/>
<evidence type="ECO:0007829" key="7">
    <source>
        <dbReference type="PDB" id="6WJL"/>
    </source>
</evidence>
<organism>
    <name type="scientific">Homo sapiens</name>
    <name type="common">Human</name>
    <dbReference type="NCBI Taxonomy" id="9606"/>
    <lineage>
        <taxon>Eukaryota</taxon>
        <taxon>Metazoa</taxon>
        <taxon>Chordata</taxon>
        <taxon>Craniata</taxon>
        <taxon>Vertebrata</taxon>
        <taxon>Euteleostomi</taxon>
        <taxon>Mammalia</taxon>
        <taxon>Eutheria</taxon>
        <taxon>Euarchontoglires</taxon>
        <taxon>Primates</taxon>
        <taxon>Haplorrhini</taxon>
        <taxon>Catarrhini</taxon>
        <taxon>Hominidae</taxon>
        <taxon>Homo</taxon>
    </lineage>
</organism>
<protein>
    <recommendedName>
        <fullName>Glypican-2</fullName>
    </recommendedName>
    <component>
        <recommendedName>
            <fullName>Secreted glypican-2</fullName>
        </recommendedName>
    </component>
</protein>